<proteinExistence type="evidence at protein level"/>
<name>BTG3_HUMAN</name>
<evidence type="ECO:0000256" key="1">
    <source>
        <dbReference type="SAM" id="MobiDB-lite"/>
    </source>
</evidence>
<evidence type="ECO:0000269" key="2">
    <source>
    </source>
</evidence>
<evidence type="ECO:0000303" key="3">
    <source>
    </source>
</evidence>
<evidence type="ECO:0000303" key="4">
    <source ref="2"/>
</evidence>
<evidence type="ECO:0000305" key="5"/>
<keyword id="KW-0025">Alternative splicing</keyword>
<keyword id="KW-1267">Proteomics identification</keyword>
<keyword id="KW-1185">Reference proteome</keyword>
<protein>
    <recommendedName>
        <fullName>Protein BTG3</fullName>
    </recommendedName>
    <alternativeName>
        <fullName>Abundant in neuroepithelium area protein</fullName>
    </alternativeName>
    <alternativeName>
        <fullName>BTG family member 3</fullName>
    </alternativeName>
    <alternativeName>
        <fullName>Protein Tob5</fullName>
    </alternativeName>
</protein>
<accession>Q14201</accession>
<accession>D3DSC4</accession>
<accession>Q53XV1</accession>
<accession>Q96ET7</accession>
<feature type="chain" id="PRO_0000143807" description="Protein BTG3">
    <location>
        <begin position="1"/>
        <end position="252"/>
    </location>
</feature>
<feature type="region of interest" description="Disordered" evidence="1">
    <location>
        <begin position="138"/>
        <end position="162"/>
    </location>
</feature>
<feature type="splice variant" id="VSP_000578" description="In isoform 2." evidence="3 4">
    <original>R</original>
    <variation>RRDGVSPCWPDCSQTPDLVIRPPWPPKALDYRREPLRPASSFLIM</variation>
    <location>
        <position position="104"/>
    </location>
</feature>
<feature type="sequence conflict" description="In Ref. 1; BAA33788." evidence="5" ref="1">
    <original>E</original>
    <variation>G</variation>
    <location>
        <position position="40"/>
    </location>
</feature>
<feature type="sequence conflict" description="In Ref. 1; BAA33788." evidence="5" ref="1">
    <original>H</original>
    <variation>P</variation>
    <location>
        <position position="45"/>
    </location>
</feature>
<comment type="function">
    <text>Overexpression impairs serum-induced cell cycle progression from the G0/G1 to S phase.</text>
</comment>
<comment type="interaction">
    <interactant intactId="EBI-948192">
        <id>Q14201</id>
    </interactant>
    <interactant intactId="EBI-448924">
        <id>Q01094</id>
        <label>E2F1</label>
    </interactant>
    <organismsDiffer>false</organismsDiffer>
    <experiments>3</experiments>
</comment>
<comment type="alternative products">
    <event type="alternative splicing"/>
    <isoform>
        <id>Q14201-1</id>
        <name>1</name>
        <sequence type="displayed"/>
    </isoform>
    <isoform>
        <id>Q14201-2</id>
        <name>2</name>
        <sequence type="described" ref="VSP_000578"/>
    </isoform>
</comment>
<comment type="tissue specificity">
    <text evidence="2">Ubiquitous. High expression in the ventricular zone of the developing central nervous system. High in ovary, testis, prostate, thymus and lung.</text>
</comment>
<comment type="developmental stage">
    <text evidence="2">Expression is cell cycle dependent with the highest levels at the end of G1 phase, peaking at the G1-S transition.</text>
</comment>
<comment type="similarity">
    <text evidence="5">Belongs to the BTG family.</text>
</comment>
<dbReference type="EMBL" id="D64110">
    <property type="protein sequence ID" value="BAA33788.1"/>
    <property type="molecule type" value="mRNA"/>
</dbReference>
<dbReference type="EMBL" id="BT007276">
    <property type="protein sequence ID" value="AAP35940.1"/>
    <property type="molecule type" value="mRNA"/>
</dbReference>
<dbReference type="EMBL" id="CH471079">
    <property type="protein sequence ID" value="EAX10026.1"/>
    <property type="molecule type" value="Genomic_DNA"/>
</dbReference>
<dbReference type="EMBL" id="CH471079">
    <property type="protein sequence ID" value="EAX10029.1"/>
    <property type="molecule type" value="Genomic_DNA"/>
</dbReference>
<dbReference type="EMBL" id="BC011957">
    <property type="protein sequence ID" value="AAH11957.1"/>
    <property type="molecule type" value="mRNA"/>
</dbReference>
<dbReference type="CCDS" id="CCDS13569.1">
    <molecule id="Q14201-1"/>
</dbReference>
<dbReference type="CCDS" id="CCDS46636.1">
    <molecule id="Q14201-2"/>
</dbReference>
<dbReference type="PIR" id="T09539">
    <property type="entry name" value="T09539"/>
</dbReference>
<dbReference type="RefSeq" id="NP_001124386.1">
    <molecule id="Q14201-2"/>
    <property type="nucleotide sequence ID" value="NM_001130914.2"/>
</dbReference>
<dbReference type="RefSeq" id="NP_006797.3">
    <molecule id="Q14201-1"/>
    <property type="nucleotide sequence ID" value="NM_006806.4"/>
</dbReference>
<dbReference type="RefSeq" id="XP_016883754.1">
    <property type="nucleotide sequence ID" value="XM_017028265.1"/>
</dbReference>
<dbReference type="RefSeq" id="XP_016883755.1">
    <property type="nucleotide sequence ID" value="XM_017028266.1"/>
</dbReference>
<dbReference type="SMR" id="Q14201"/>
<dbReference type="BioGRID" id="116150">
    <property type="interactions" value="99"/>
</dbReference>
<dbReference type="FunCoup" id="Q14201">
    <property type="interactions" value="1955"/>
</dbReference>
<dbReference type="IntAct" id="Q14201">
    <property type="interactions" value="94"/>
</dbReference>
<dbReference type="MINT" id="Q14201"/>
<dbReference type="STRING" id="9606.ENSP00000344609"/>
<dbReference type="GlyGen" id="Q14201">
    <property type="glycosylation" value="1 site, 1 O-linked glycan (1 site)"/>
</dbReference>
<dbReference type="iPTMnet" id="Q14201"/>
<dbReference type="PhosphoSitePlus" id="Q14201"/>
<dbReference type="BioMuta" id="BTG3"/>
<dbReference type="DMDM" id="23830904"/>
<dbReference type="jPOST" id="Q14201"/>
<dbReference type="MassIVE" id="Q14201"/>
<dbReference type="PeptideAtlas" id="Q14201"/>
<dbReference type="ProteomicsDB" id="59920">
    <molecule id="Q14201-1"/>
</dbReference>
<dbReference type="ProteomicsDB" id="59921">
    <molecule id="Q14201-2"/>
</dbReference>
<dbReference type="Pumba" id="Q14201"/>
<dbReference type="Antibodypedia" id="5926">
    <property type="antibodies" value="132 antibodies from 25 providers"/>
</dbReference>
<dbReference type="DNASU" id="10950"/>
<dbReference type="Ensembl" id="ENST00000339775.10">
    <molecule id="Q14201-2"/>
    <property type="protein sequence ID" value="ENSP00000344609.6"/>
    <property type="gene ID" value="ENSG00000154640.15"/>
</dbReference>
<dbReference type="Ensembl" id="ENST00000348354.7">
    <molecule id="Q14201-1"/>
    <property type="protein sequence ID" value="ENSP00000284879.8"/>
    <property type="gene ID" value="ENSG00000154640.15"/>
</dbReference>
<dbReference type="GeneID" id="10950"/>
<dbReference type="KEGG" id="hsa:10950"/>
<dbReference type="MANE-Select" id="ENST00000348354.7">
    <property type="protein sequence ID" value="ENSP00000284879.8"/>
    <property type="RefSeq nucleotide sequence ID" value="NM_006806.5"/>
    <property type="RefSeq protein sequence ID" value="NP_006797.3"/>
</dbReference>
<dbReference type="UCSC" id="uc002ykl.4">
    <molecule id="Q14201-1"/>
    <property type="organism name" value="human"/>
</dbReference>
<dbReference type="AGR" id="HGNC:1132"/>
<dbReference type="CTD" id="10950"/>
<dbReference type="DisGeNET" id="10950"/>
<dbReference type="GeneCards" id="BTG3"/>
<dbReference type="HGNC" id="HGNC:1132">
    <property type="gene designation" value="BTG3"/>
</dbReference>
<dbReference type="HPA" id="ENSG00000154640">
    <property type="expression patterns" value="Low tissue specificity"/>
</dbReference>
<dbReference type="MIM" id="605674">
    <property type="type" value="gene"/>
</dbReference>
<dbReference type="neXtProt" id="NX_Q14201"/>
<dbReference type="OpenTargets" id="ENSG00000154640"/>
<dbReference type="PharmGKB" id="PA25452"/>
<dbReference type="VEuPathDB" id="HostDB:ENSG00000154640"/>
<dbReference type="GeneTree" id="ENSGT00950000182952"/>
<dbReference type="HOGENOM" id="CLU_079660_3_0_1"/>
<dbReference type="InParanoid" id="Q14201"/>
<dbReference type="OMA" id="HYGYRPR"/>
<dbReference type="OrthoDB" id="19928at2759"/>
<dbReference type="PAN-GO" id="Q14201">
    <property type="GO annotations" value="4 GO annotations based on evolutionary models"/>
</dbReference>
<dbReference type="PhylomeDB" id="Q14201"/>
<dbReference type="TreeFam" id="TF105272"/>
<dbReference type="PathwayCommons" id="Q14201"/>
<dbReference type="SignaLink" id="Q14201"/>
<dbReference type="BioGRID-ORCS" id="10950">
    <property type="hits" value="10 hits in 1160 CRISPR screens"/>
</dbReference>
<dbReference type="CD-CODE" id="232F8A39">
    <property type="entry name" value="P-body"/>
</dbReference>
<dbReference type="CD-CODE" id="DEE660B4">
    <property type="entry name" value="Stress granule"/>
</dbReference>
<dbReference type="ChiTaRS" id="BTG3">
    <property type="organism name" value="human"/>
</dbReference>
<dbReference type="GeneWiki" id="BTG3"/>
<dbReference type="GenomeRNAi" id="10950"/>
<dbReference type="Pharos" id="Q14201">
    <property type="development level" value="Tbio"/>
</dbReference>
<dbReference type="PRO" id="PR:Q14201"/>
<dbReference type="Proteomes" id="UP000005640">
    <property type="component" value="Chromosome 21"/>
</dbReference>
<dbReference type="RNAct" id="Q14201">
    <property type="molecule type" value="protein"/>
</dbReference>
<dbReference type="Bgee" id="ENSG00000154640">
    <property type="expression patterns" value="Expressed in ventricular zone and 193 other cell types or tissues"/>
</dbReference>
<dbReference type="ExpressionAtlas" id="Q14201">
    <property type="expression patterns" value="baseline and differential"/>
</dbReference>
<dbReference type="GO" id="GO:0005737">
    <property type="term" value="C:cytoplasm"/>
    <property type="evidence" value="ECO:0000314"/>
    <property type="project" value="MGI"/>
</dbReference>
<dbReference type="GO" id="GO:0005634">
    <property type="term" value="C:nucleus"/>
    <property type="evidence" value="ECO:0000318"/>
    <property type="project" value="GO_Central"/>
</dbReference>
<dbReference type="GO" id="GO:0008285">
    <property type="term" value="P:negative regulation of cell population proliferation"/>
    <property type="evidence" value="ECO:0000304"/>
    <property type="project" value="ProtInc"/>
</dbReference>
<dbReference type="GO" id="GO:0045930">
    <property type="term" value="P:negative regulation of mitotic cell cycle"/>
    <property type="evidence" value="ECO:0000314"/>
    <property type="project" value="MGI"/>
</dbReference>
<dbReference type="FunFam" id="3.90.640.90:FF:000002">
    <property type="entry name" value="BTG anti-proliferation factor 4"/>
    <property type="match status" value="1"/>
</dbReference>
<dbReference type="Gene3D" id="3.90.640.90">
    <property type="entry name" value="Anti-proliferative protein, N-terminal domain"/>
    <property type="match status" value="1"/>
</dbReference>
<dbReference type="InterPro" id="IPR002087">
    <property type="entry name" value="Anti_prolifrtn"/>
</dbReference>
<dbReference type="InterPro" id="IPR033332">
    <property type="entry name" value="BTG"/>
</dbReference>
<dbReference type="InterPro" id="IPR036054">
    <property type="entry name" value="BTG-like_sf"/>
</dbReference>
<dbReference type="PANTHER" id="PTHR22978">
    <property type="entry name" value="B-CELL TRANSLOCATION GENE"/>
    <property type="match status" value="1"/>
</dbReference>
<dbReference type="PANTHER" id="PTHR22978:SF6">
    <property type="entry name" value="PROTEIN BTG3"/>
    <property type="match status" value="1"/>
</dbReference>
<dbReference type="Pfam" id="PF07742">
    <property type="entry name" value="BTG"/>
    <property type="match status" value="1"/>
</dbReference>
<dbReference type="PRINTS" id="PR00310">
    <property type="entry name" value="ANTIPRLFBTG1"/>
</dbReference>
<dbReference type="SMART" id="SM00099">
    <property type="entry name" value="btg1"/>
    <property type="match status" value="1"/>
</dbReference>
<dbReference type="SUPFAM" id="SSF160696">
    <property type="entry name" value="BTG domain-like"/>
    <property type="match status" value="1"/>
</dbReference>
<dbReference type="PROSITE" id="PS00960">
    <property type="entry name" value="BTG_1"/>
    <property type="match status" value="1"/>
</dbReference>
<dbReference type="PROSITE" id="PS01203">
    <property type="entry name" value="BTG_2"/>
    <property type="match status" value="1"/>
</dbReference>
<sequence length="252" mass="29116">MKNEIAAVVFFFTRLVRKHDKLKKEAVERFAEKLTLILQEKYKNHWYPEKPSKGQAYRCIRVNKFQRVDPDVLKACENSCILYSDLGLPKELTLWVDPCEVCCRYGEKNNAFIVASFENKDENKDEISRKVTRALDKVTSDYHSGSSSSDEETSKEMEVKPSSVTAAASPVYQISELIFPPLPMWHPLPRKKPGMYRGNGHQNHYPPPVPFGYPNQGRKNKPYRPIPVTWVPPPGMHCDRNHWINPHMLAPH</sequence>
<reference key="1">
    <citation type="journal article" date="1998" name="Oncogene">
        <title>ANA, a novel member of Tob/BTG1 family, is expressed in the ventricular zone of the developing central nervous system.</title>
        <authorList>
            <person name="Yoshida Y."/>
            <person name="Matsuda S."/>
            <person name="Ikematsu N."/>
            <person name="Kawamura-Tsuzuku J."/>
            <person name="Inazawa J."/>
            <person name="Umemori H."/>
            <person name="Yamamoto T."/>
        </authorList>
    </citation>
    <scope>NUCLEOTIDE SEQUENCE [MRNA] (ISOFORM 1)</scope>
</reference>
<reference key="2">
    <citation type="submission" date="2003-05" db="EMBL/GenBank/DDBJ databases">
        <title>Cloning of human full-length CDSs in BD Creator(TM) system donor vector.</title>
        <authorList>
            <person name="Kalnine N."/>
            <person name="Chen X."/>
            <person name="Rolfs A."/>
            <person name="Halleck A."/>
            <person name="Hines L."/>
            <person name="Eisenstein S."/>
            <person name="Koundinya M."/>
            <person name="Raphael J."/>
            <person name="Moreira D."/>
            <person name="Kelley T."/>
            <person name="LaBaer J."/>
            <person name="Lin Y."/>
            <person name="Phelan M."/>
            <person name="Farmer A."/>
        </authorList>
    </citation>
    <scope>NUCLEOTIDE SEQUENCE [LARGE SCALE MRNA] (ISOFORM 2)</scope>
</reference>
<reference key="3">
    <citation type="submission" date="2005-09" db="EMBL/GenBank/DDBJ databases">
        <authorList>
            <person name="Mural R.J."/>
            <person name="Istrail S."/>
            <person name="Sutton G.G."/>
            <person name="Florea L."/>
            <person name="Halpern A.L."/>
            <person name="Mobarry C.M."/>
            <person name="Lippert R."/>
            <person name="Walenz B."/>
            <person name="Shatkay H."/>
            <person name="Dew I."/>
            <person name="Miller J.R."/>
            <person name="Flanigan M.J."/>
            <person name="Edwards N.J."/>
            <person name="Bolanos R."/>
            <person name="Fasulo D."/>
            <person name="Halldorsson B.V."/>
            <person name="Hannenhalli S."/>
            <person name="Turner R."/>
            <person name="Yooseph S."/>
            <person name="Lu F."/>
            <person name="Nusskern D.R."/>
            <person name="Shue B.C."/>
            <person name="Zheng X.H."/>
            <person name="Zhong F."/>
            <person name="Delcher A.L."/>
            <person name="Huson D.H."/>
            <person name="Kravitz S.A."/>
            <person name="Mouchard L."/>
            <person name="Reinert K."/>
            <person name="Remington K.A."/>
            <person name="Clark A.G."/>
            <person name="Waterman M.S."/>
            <person name="Eichler E.E."/>
            <person name="Adams M.D."/>
            <person name="Hunkapiller M.W."/>
            <person name="Myers E.W."/>
            <person name="Venter J.C."/>
        </authorList>
    </citation>
    <scope>NUCLEOTIDE SEQUENCE [LARGE SCALE GENOMIC DNA]</scope>
</reference>
<reference key="4">
    <citation type="journal article" date="2004" name="Genome Res.">
        <title>The status, quality, and expansion of the NIH full-length cDNA project: the Mammalian Gene Collection (MGC).</title>
        <authorList>
            <consortium name="The MGC Project Team"/>
        </authorList>
    </citation>
    <scope>NUCLEOTIDE SEQUENCE [LARGE SCALE MRNA] (ISOFORM 2)</scope>
    <source>
        <tissue>Ovary</tissue>
    </source>
</reference>
<reference key="5">
    <citation type="journal article" date="1997" name="Leukemia">
        <title>Cloning of the mouse BTG3 gene and definition of a new gene family (the BTG family) involved in the negative control of the cell cycle.</title>
        <authorList>
            <person name="Guehenneux F."/>
            <person name="Duret L."/>
            <person name="Callanan M.B."/>
            <person name="Bouhas R."/>
            <person name="Hayette S."/>
            <person name="Berthet C."/>
            <person name="Samarut C."/>
            <person name="Rimokh R."/>
            <person name="Birot A.-M."/>
            <person name="Wang Q."/>
            <person name="Magaud J.-P."/>
            <person name="Rouault J.-P."/>
        </authorList>
    </citation>
    <scope>TISSUE SPECIFICITY</scope>
    <scope>DEVELOPMENTAL STAGE</scope>
</reference>
<organism>
    <name type="scientific">Homo sapiens</name>
    <name type="common">Human</name>
    <dbReference type="NCBI Taxonomy" id="9606"/>
    <lineage>
        <taxon>Eukaryota</taxon>
        <taxon>Metazoa</taxon>
        <taxon>Chordata</taxon>
        <taxon>Craniata</taxon>
        <taxon>Vertebrata</taxon>
        <taxon>Euteleostomi</taxon>
        <taxon>Mammalia</taxon>
        <taxon>Eutheria</taxon>
        <taxon>Euarchontoglires</taxon>
        <taxon>Primates</taxon>
        <taxon>Haplorrhini</taxon>
        <taxon>Catarrhini</taxon>
        <taxon>Hominidae</taxon>
        <taxon>Homo</taxon>
    </lineage>
</organism>
<gene>
    <name type="primary">BTG3</name>
    <name type="synonym">ANA</name>
    <name type="synonym">TOB5</name>
</gene>